<organism>
    <name type="scientific">Saccharomyces cerevisiae (strain ATCC 204508 / S288c)</name>
    <name type="common">Baker's yeast</name>
    <dbReference type="NCBI Taxonomy" id="559292"/>
    <lineage>
        <taxon>Eukaryota</taxon>
        <taxon>Fungi</taxon>
        <taxon>Dikarya</taxon>
        <taxon>Ascomycota</taxon>
        <taxon>Saccharomycotina</taxon>
        <taxon>Saccharomycetes</taxon>
        <taxon>Saccharomycetales</taxon>
        <taxon>Saccharomycetaceae</taxon>
        <taxon>Saccharomyces</taxon>
    </lineage>
</organism>
<keyword id="KW-0002">3D-structure</keyword>
<keyword id="KW-0963">Cytoplasm</keyword>
<keyword id="KW-0903">Direct protein sequencing</keyword>
<keyword id="KW-0597">Phosphoprotein</keyword>
<keyword id="KW-1185">Reference proteome</keyword>
<keyword id="KW-0687">Ribonucleoprotein</keyword>
<keyword id="KW-0689">Ribosomal protein</keyword>
<proteinExistence type="evidence at protein level"/>
<evidence type="ECO:0000256" key="1">
    <source>
        <dbReference type="SAM" id="MobiDB-lite"/>
    </source>
</evidence>
<evidence type="ECO:0000269" key="2">
    <source>
    </source>
</evidence>
<evidence type="ECO:0000269" key="3">
    <source>
    </source>
</evidence>
<evidence type="ECO:0000269" key="4">
    <source>
    </source>
</evidence>
<evidence type="ECO:0000269" key="5">
    <source>
    </source>
</evidence>
<evidence type="ECO:0000303" key="6">
    <source>
    </source>
</evidence>
<evidence type="ECO:0000303" key="7">
    <source>
    </source>
</evidence>
<evidence type="ECO:0000305" key="8"/>
<evidence type="ECO:0000305" key="9">
    <source>
    </source>
</evidence>
<evidence type="ECO:0000305" key="10">
    <source>
    </source>
</evidence>
<evidence type="ECO:0007744" key="11">
    <source>
    </source>
</evidence>
<evidence type="ECO:0007744" key="12">
    <source>
    </source>
</evidence>
<evidence type="ECO:0007744" key="13">
    <source>
    </source>
</evidence>
<evidence type="ECO:0007829" key="14">
    <source>
        <dbReference type="PDB" id="8C83"/>
    </source>
</evidence>
<reference key="1">
    <citation type="journal article" date="1997" name="Nature">
        <title>The nucleotide sequence of Saccharomyces cerevisiae chromosome V.</title>
        <authorList>
            <person name="Dietrich F.S."/>
            <person name="Mulligan J.T."/>
            <person name="Hennessy K.M."/>
            <person name="Yelton M.A."/>
            <person name="Allen E."/>
            <person name="Araujo R."/>
            <person name="Aviles E."/>
            <person name="Berno A."/>
            <person name="Brennan T."/>
            <person name="Carpenter J."/>
            <person name="Chen E."/>
            <person name="Cherry J.M."/>
            <person name="Chung E."/>
            <person name="Duncan M."/>
            <person name="Guzman E."/>
            <person name="Hartzell G."/>
            <person name="Hunicke-Smith S."/>
            <person name="Hyman R.W."/>
            <person name="Kayser A."/>
            <person name="Komp C."/>
            <person name="Lashkari D."/>
            <person name="Lew H."/>
            <person name="Lin D."/>
            <person name="Mosedale D."/>
            <person name="Nakahara K."/>
            <person name="Namath A."/>
            <person name="Norgren R."/>
            <person name="Oefner P."/>
            <person name="Oh C."/>
            <person name="Petel F.X."/>
            <person name="Roberts D."/>
            <person name="Sehl P."/>
            <person name="Schramm S."/>
            <person name="Shogren T."/>
            <person name="Smith V."/>
            <person name="Taylor P."/>
            <person name="Wei Y."/>
            <person name="Botstein D."/>
            <person name="Davis R.W."/>
        </authorList>
    </citation>
    <scope>NUCLEOTIDE SEQUENCE [LARGE SCALE GENOMIC DNA]</scope>
    <source>
        <strain>ATCC 204508 / S288c</strain>
    </source>
</reference>
<reference key="2">
    <citation type="journal article" date="2014" name="G3 (Bethesda)">
        <title>The reference genome sequence of Saccharomyces cerevisiae: Then and now.</title>
        <authorList>
            <person name="Engel S.R."/>
            <person name="Dietrich F.S."/>
            <person name="Fisk D.G."/>
            <person name="Binkley G."/>
            <person name="Balakrishnan R."/>
            <person name="Costanzo M.C."/>
            <person name="Dwight S.S."/>
            <person name="Hitz B.C."/>
            <person name="Karra K."/>
            <person name="Nash R.S."/>
            <person name="Weng S."/>
            <person name="Wong E.D."/>
            <person name="Lloyd P."/>
            <person name="Skrzypek M.S."/>
            <person name="Miyasato S.R."/>
            <person name="Simison M."/>
            <person name="Cherry J.M."/>
        </authorList>
    </citation>
    <scope>GENOME REANNOTATION</scope>
    <source>
        <strain>ATCC 204508 / S288c</strain>
    </source>
</reference>
<reference key="3">
    <citation type="journal article" date="2007" name="Genome Res.">
        <title>Approaching a complete repository of sequence-verified protein-encoding clones for Saccharomyces cerevisiae.</title>
        <authorList>
            <person name="Hu Y."/>
            <person name="Rolfs A."/>
            <person name="Bhullar B."/>
            <person name="Murthy T.V.S."/>
            <person name="Zhu C."/>
            <person name="Berger M.F."/>
            <person name="Camargo A.A."/>
            <person name="Kelley F."/>
            <person name="McCarron S."/>
            <person name="Jepson D."/>
            <person name="Richardson A."/>
            <person name="Raphael J."/>
            <person name="Moreira D."/>
            <person name="Taycher E."/>
            <person name="Zuo D."/>
            <person name="Mohr S."/>
            <person name="Kane M.F."/>
            <person name="Williamson J."/>
            <person name="Simpson A.J.G."/>
            <person name="Bulyk M.L."/>
            <person name="Harlow E."/>
            <person name="Marsischky G."/>
            <person name="Kolodner R.D."/>
            <person name="LaBaer J."/>
        </authorList>
    </citation>
    <scope>NUCLEOTIDE SEQUENCE [GENOMIC DNA]</scope>
    <source>
        <strain>ATCC 204508 / S288c</strain>
    </source>
</reference>
<reference key="4">
    <citation type="journal article" date="2007" name="Proc. Natl. Acad. Sci. U.S.A.">
        <title>High-density yeast-tiling array reveals previously undiscovered introns and extensive regulation of meiotic splicing.</title>
        <authorList>
            <person name="Juneau K."/>
            <person name="Palm C."/>
            <person name="Miranda M."/>
            <person name="Davis R.W."/>
        </authorList>
    </citation>
    <scope>NUCLEOTIDE SEQUENCE [MRNA] OF 1-45</scope>
    <source>
        <strain>ATCC 201390 / BY4743</strain>
    </source>
</reference>
<reference key="5">
    <citation type="journal article" date="1984" name="Mol. Gen. Genet.">
        <title>Yeast ribosomal proteins. VIII. Isolation of two proteins and sequence characterization of twenty-four proteins from cytoplasmic ribosomes.</title>
        <authorList>
            <person name="Otaka E."/>
            <person name="Higo K."/>
            <person name="Itoh T."/>
        </authorList>
    </citation>
    <scope>PARTIAL PROTEIN SEQUENCE OF 2-51</scope>
    <scope>CLEAVAGE OF INITIATOR METHIONINE</scope>
</reference>
<reference key="6">
    <citation type="journal article" date="1990" name="J. Biol. Chem.">
        <title>Structure and regulation of the SSA4 HSP70 gene of Saccharomyces cerevisiae.</title>
        <authorList>
            <person name="Boorstein W.R."/>
            <person name="Craig E.A."/>
        </authorList>
    </citation>
    <scope>NUCLEOTIDE SEQUENCE [GENOMIC DNA] OF 70-200</scope>
    <source>
        <strain>S288c / DS10</strain>
    </source>
</reference>
<reference key="7">
    <citation type="journal article" date="1998" name="Yeast">
        <title>The list of cytoplasmic ribosomal proteins of Saccharomyces cerevisiae.</title>
        <authorList>
            <person name="Planta R.J."/>
            <person name="Mager W.H."/>
        </authorList>
    </citation>
    <scope>NOMENCLATURE</scope>
    <scope>SUBUNIT</scope>
</reference>
<reference key="8">
    <citation type="journal article" date="2003" name="Nature">
        <title>Global analysis of protein localization in budding yeast.</title>
        <authorList>
            <person name="Huh W.-K."/>
            <person name="Falvo J.V."/>
            <person name="Gerke L.C."/>
            <person name="Carroll A.S."/>
            <person name="Howson R.W."/>
            <person name="Weissman J.S."/>
            <person name="O'Shea E.K."/>
        </authorList>
    </citation>
    <scope>SUBCELLULAR LOCATION [LARGE SCALE ANALYSIS]</scope>
</reference>
<reference key="9">
    <citation type="journal article" date="2003" name="Nature">
        <title>Global analysis of protein expression in yeast.</title>
        <authorList>
            <person name="Ghaemmaghami S."/>
            <person name="Huh W.-K."/>
            <person name="Bower K."/>
            <person name="Howson R.W."/>
            <person name="Belle A."/>
            <person name="Dephoure N."/>
            <person name="O'Shea E.K."/>
            <person name="Weissman J.S."/>
        </authorList>
    </citation>
    <scope>LEVEL OF PROTEIN EXPRESSION [LARGE SCALE ANALYSIS]</scope>
</reference>
<reference key="10">
    <citation type="journal article" date="2007" name="Proc. Natl. Acad. Sci. U.S.A.">
        <title>Analysis of phosphorylation sites on proteins from Saccharomyces cerevisiae by electron transfer dissociation (ETD) mass spectrometry.</title>
        <authorList>
            <person name="Chi A."/>
            <person name="Huttenhower C."/>
            <person name="Geer L.Y."/>
            <person name="Coon J.J."/>
            <person name="Syka J.E.P."/>
            <person name="Bai D.L."/>
            <person name="Shabanowitz J."/>
            <person name="Burke D.J."/>
            <person name="Troyanskaya O.G."/>
            <person name="Hunt D.F."/>
        </authorList>
    </citation>
    <scope>PHOSPHORYLATION [LARGE SCALE ANALYSIS] AT SER-66; SER-69 AND SER-73</scope>
    <scope>IDENTIFICATION BY MASS SPECTROMETRY [LARGE SCALE ANALYSIS]</scope>
</reference>
<reference key="11">
    <citation type="journal article" date="2008" name="Mol. Cell. Proteomics">
        <title>A multidimensional chromatography technology for in-depth phosphoproteome analysis.</title>
        <authorList>
            <person name="Albuquerque C.P."/>
            <person name="Smolka M.B."/>
            <person name="Payne S.H."/>
            <person name="Bafna V."/>
            <person name="Eng J."/>
            <person name="Zhou H."/>
        </authorList>
    </citation>
    <scope>PHOSPHORYLATION [LARGE SCALE ANALYSIS] AT THR-107 AND SER-158</scope>
    <scope>IDENTIFICATION BY MASS SPECTROMETRY [LARGE SCALE ANALYSIS]</scope>
</reference>
<reference key="12">
    <citation type="journal article" date="2009" name="Science">
        <title>Global analysis of Cdk1 substrate phosphorylation sites provides insights into evolution.</title>
        <authorList>
            <person name="Holt L.J."/>
            <person name="Tuch B.B."/>
            <person name="Villen J."/>
            <person name="Johnson A.D."/>
            <person name="Gygi S.P."/>
            <person name="Morgan D.O."/>
        </authorList>
    </citation>
    <scope>PHOSPHORYLATION [LARGE SCALE ANALYSIS] AT THR-62; SER-69; SER-73; SER-86; SER-154; SER-155 AND SER-161</scope>
    <scope>IDENTIFICATION BY MASS SPECTROMETRY [LARGE SCALE ANALYSIS]</scope>
</reference>
<reference key="13">
    <citation type="journal article" date="2011" name="Science">
        <title>The structure of the eukaryotic ribosome at 3.0 A resolution.</title>
        <authorList>
            <person name="Ben-Shem A."/>
            <person name="Garreau de Loubresse N."/>
            <person name="Melnikov S."/>
            <person name="Jenner L."/>
            <person name="Yusupova G."/>
            <person name="Yusupov M."/>
        </authorList>
    </citation>
    <scope>SUBUNIT</scope>
    <scope>SUBCELLULAR LOCATION</scope>
</reference>
<reference key="14">
    <citation type="journal article" date="2014" name="Curr. Opin. Struct. Biol.">
        <title>A new system for naming ribosomal proteins.</title>
        <authorList>
            <person name="Ban N."/>
            <person name="Beckmann R."/>
            <person name="Cate J.H.D."/>
            <person name="Dinman J.D."/>
            <person name="Dragon F."/>
            <person name="Ellis S.R."/>
            <person name="Lafontaine D.L.J."/>
            <person name="Lindahl L."/>
            <person name="Liljas A."/>
            <person name="Lipton J.M."/>
            <person name="McAlear M.A."/>
            <person name="Moore P.B."/>
            <person name="Noller H.F."/>
            <person name="Ortega J."/>
            <person name="Panse V.G."/>
            <person name="Ramakrishnan V."/>
            <person name="Spahn C.M.T."/>
            <person name="Steitz T.A."/>
            <person name="Tchorzewski M."/>
            <person name="Tollervey D."/>
            <person name="Warren A.J."/>
            <person name="Williamson J.R."/>
            <person name="Wilson D."/>
            <person name="Yonath A."/>
            <person name="Yusupov M."/>
        </authorList>
    </citation>
    <scope>NOMENCLATURE</scope>
</reference>
<sequence length="200" mass="22490">MGISRDSRHKRSATGAKRAQFRKKRKFELGRQPANTKIGAKRIHSVRTRGGNKKYRALRIETGNFSWASEGISKKTRIAGVVYHPSNNELVRTNTLTKAAIVQIDATPFRQWFEAHYGQTLGKKKNVKEEETVAKSKNAERKWAARAASAKIESSVESQFSAGRLYACISSRPGQSGRCDGYILEGEELAFYLRRLTAKK</sequence>
<comment type="function">
    <text evidence="9">Component of the ribosome, a large ribonucleoprotein complex responsible for the synthesis of proteins in the cell. The small ribosomal subunit (SSU) binds messenger RNAs (mRNAs) and translates the encoded message by selecting cognate aminoacyl-transfer RNA (tRNA) molecules. The large subunit (LSU) contains the ribosomal catalytic site termed the peptidyl transferase center (PTC), which catalyzes the formation of peptide bonds, thereby polymerizing the amino acids delivered by tRNAs into a polypeptide chain. The nascent polypeptides leave the ribosome through a tunnel in the LSU and interact with protein factors that function in enzymatic processing, targeting, and the membrane insertion of nascent chains at the exit of the ribosomal tunnel.</text>
</comment>
<comment type="subunit">
    <text evidence="5 10">Component of the small ribosomal subunit (SSU). Mature yeast ribosomes consist of a small (40S) and a large (60S) subunit. The 40S small subunit contains 1 molecule of ribosomal RNA (18S rRNA) and 33 different proteins (encoded by 57 genes). The large 60S subunit contains 3 rRNA molecules (25S, 5.8S and 5S rRNA) and 46 different proteins (encoded by 81 genes) (PubMed:22096102, PubMed:9559554).</text>
</comment>
<comment type="subcellular location">
    <subcellularLocation>
        <location evidence="2 5">Cytoplasm</location>
    </subcellularLocation>
</comment>
<comment type="miscellaneous">
    <text evidence="3">Present with 14400 molecules/cell in log phase SD medium.</text>
</comment>
<comment type="miscellaneous">
    <text evidence="8">There are 2 genes for eS8 in yeast.</text>
</comment>
<comment type="similarity">
    <text evidence="8">Belongs to the eukaryotic ribosomal protein eS8 family.</text>
</comment>
<protein>
    <recommendedName>
        <fullName evidence="6">Small ribosomal subunit protein eS8B</fullName>
    </recommendedName>
    <alternativeName>
        <fullName evidence="7">40S ribosomal protein S8-B</fullName>
    </alternativeName>
    <alternativeName>
        <fullName>RP19</fullName>
    </alternativeName>
    <alternativeName>
        <fullName>S14</fullName>
    </alternativeName>
    <alternativeName>
        <fullName>YS9</fullName>
    </alternativeName>
</protein>
<dbReference type="EMBL" id="U18839">
    <property type="protein sequence ID" value="AAB64657.1"/>
    <property type="molecule type" value="Genomic_DNA"/>
</dbReference>
<dbReference type="EMBL" id="AY692824">
    <property type="protein sequence ID" value="AAT92843.1"/>
    <property type="molecule type" value="Genomic_DNA"/>
</dbReference>
<dbReference type="EMBL" id="EF123143">
    <property type="protein sequence ID" value="ABM97487.1"/>
    <property type="molecule type" value="mRNA"/>
</dbReference>
<dbReference type="EMBL" id="J05637">
    <property type="protein sequence ID" value="AAA63573.1"/>
    <property type="molecule type" value="Genomic_DNA"/>
</dbReference>
<dbReference type="EMBL" id="BK006939">
    <property type="protein sequence ID" value="DAA07763.1"/>
    <property type="molecule type" value="Genomic_DNA"/>
</dbReference>
<dbReference type="PIR" id="S45591">
    <property type="entry name" value="S45591"/>
</dbReference>
<dbReference type="RefSeq" id="NP_011028.1">
    <property type="nucleotide sequence ID" value="NM_001178993.1"/>
</dbReference>
<dbReference type="PDB" id="7ZUW">
    <property type="method" value="EM"/>
    <property type="resolution" value="4.30 A"/>
    <property type="chains" value="AI=1-200"/>
</dbReference>
<dbReference type="PDB" id="7ZUX">
    <property type="method" value="EM"/>
    <property type="resolution" value="2.50 A"/>
    <property type="chains" value="DI=1-200"/>
</dbReference>
<dbReference type="PDB" id="8BQD">
    <property type="method" value="EM"/>
    <property type="resolution" value="3.90 A"/>
    <property type="chains" value="V=1-200"/>
</dbReference>
<dbReference type="PDB" id="8C83">
    <property type="method" value="EM"/>
    <property type="resolution" value="3.00 A"/>
    <property type="chains" value="V=1-200"/>
</dbReference>
<dbReference type="PDB" id="8CCS">
    <property type="method" value="EM"/>
    <property type="resolution" value="1.97 A"/>
    <property type="chains" value="l=1-200"/>
</dbReference>
<dbReference type="PDB" id="8CDL">
    <property type="method" value="EM"/>
    <property type="resolution" value="2.72 A"/>
    <property type="chains" value="l=1-200"/>
</dbReference>
<dbReference type="PDB" id="8CDR">
    <property type="method" value="EM"/>
    <property type="resolution" value="2.04 A"/>
    <property type="chains" value="l=1-200"/>
</dbReference>
<dbReference type="PDB" id="8CEH">
    <property type="method" value="EM"/>
    <property type="resolution" value="2.05 A"/>
    <property type="chains" value="l=1-200"/>
</dbReference>
<dbReference type="PDB" id="8CF5">
    <property type="method" value="EM"/>
    <property type="resolution" value="2.71 A"/>
    <property type="chains" value="l=1-200"/>
</dbReference>
<dbReference type="PDB" id="8CG8">
    <property type="method" value="EM"/>
    <property type="resolution" value="2.57 A"/>
    <property type="chains" value="l=1-200"/>
</dbReference>
<dbReference type="PDB" id="8CGN">
    <property type="method" value="EM"/>
    <property type="resolution" value="2.28 A"/>
    <property type="chains" value="l=1-200"/>
</dbReference>
<dbReference type="PDB" id="8CIV">
    <property type="method" value="EM"/>
    <property type="resolution" value="2.47 A"/>
    <property type="chains" value="l=1-200"/>
</dbReference>
<dbReference type="PDB" id="8CMJ">
    <property type="method" value="EM"/>
    <property type="resolution" value="3.79 A"/>
    <property type="chains" value="l=1-200"/>
</dbReference>
<dbReference type="PDBsum" id="7ZUW"/>
<dbReference type="PDBsum" id="7ZUX"/>
<dbReference type="PDBsum" id="8BQD"/>
<dbReference type="PDBsum" id="8C83"/>
<dbReference type="PDBsum" id="8CCS"/>
<dbReference type="PDBsum" id="8CDL"/>
<dbReference type="PDBsum" id="8CDR"/>
<dbReference type="PDBsum" id="8CEH"/>
<dbReference type="PDBsum" id="8CF5"/>
<dbReference type="PDBsum" id="8CG8"/>
<dbReference type="PDBsum" id="8CGN"/>
<dbReference type="PDBsum" id="8CIV"/>
<dbReference type="PDBsum" id="8CMJ"/>
<dbReference type="EMDB" id="EMD-14978"/>
<dbReference type="EMDB" id="EMD-14979"/>
<dbReference type="EMDB" id="EMD-16182"/>
<dbReference type="EMDB" id="EMD-16470"/>
<dbReference type="EMDB" id="EMD-16563"/>
<dbReference type="EMDB" id="EMD-16591"/>
<dbReference type="EMDB" id="EMD-16594"/>
<dbReference type="EMDB" id="EMD-16609"/>
<dbReference type="EMDB" id="EMD-16616"/>
<dbReference type="EMDB" id="EMD-16634"/>
<dbReference type="EMDB" id="EMD-16648"/>
<dbReference type="EMDB" id="EMD-16684"/>
<dbReference type="EMDB" id="EMD-16729"/>
<dbReference type="SMR" id="P0CX40"/>
<dbReference type="BioGRID" id="32629">
    <property type="interactions" value="970"/>
</dbReference>
<dbReference type="BioGRID" id="36848">
    <property type="interactions" value="120"/>
</dbReference>
<dbReference type="ComplexPortal" id="CPX-1599">
    <property type="entry name" value="40S cytosolic small ribosomal subunit"/>
</dbReference>
<dbReference type="FunCoup" id="P0CX40">
    <property type="interactions" value="1113"/>
</dbReference>
<dbReference type="IntAct" id="P0CX40">
    <property type="interactions" value="39"/>
</dbReference>
<dbReference type="MINT" id="P0CX40"/>
<dbReference type="iPTMnet" id="P0CX40"/>
<dbReference type="EnsemblFungi" id="YBL072C_mRNA">
    <property type="protein sequence ID" value="YBL072C"/>
    <property type="gene ID" value="YBL072C"/>
</dbReference>
<dbReference type="EnsemblFungi" id="YER102W_mRNA">
    <property type="protein sequence ID" value="YER102W"/>
    <property type="gene ID" value="YER102W"/>
</dbReference>
<dbReference type="GeneID" id="856839"/>
<dbReference type="KEGG" id="sce:YBL072C"/>
<dbReference type="KEGG" id="sce:YER102W"/>
<dbReference type="AGR" id="SGD:S000000904"/>
<dbReference type="SGD" id="S000000904">
    <property type="gene designation" value="RPS8B"/>
</dbReference>
<dbReference type="VEuPathDB" id="FungiDB:YBL072C"/>
<dbReference type="VEuPathDB" id="FungiDB:YER102W"/>
<dbReference type="GeneTree" id="ENSGT00390000012433"/>
<dbReference type="HOGENOM" id="CLU_080597_1_1_1"/>
<dbReference type="InParanoid" id="P0CX40"/>
<dbReference type="OMA" id="QRPHYRK"/>
<dbReference type="OrthoDB" id="1703270at2759"/>
<dbReference type="BioCyc" id="YEAST:G3O-30267-MONOMER"/>
<dbReference type="Reactome" id="R-SCE-156827">
    <property type="pathway name" value="L13a-mediated translational silencing of Ceruloplasmin expression"/>
</dbReference>
<dbReference type="Reactome" id="R-SCE-1799339">
    <property type="pathway name" value="SRP-dependent cotranslational protein targeting to membrane"/>
</dbReference>
<dbReference type="Reactome" id="R-SCE-72649">
    <property type="pathway name" value="Translation initiation complex formation"/>
</dbReference>
<dbReference type="Reactome" id="R-SCE-72689">
    <property type="pathway name" value="Formation of a pool of free 40S subunits"/>
</dbReference>
<dbReference type="Reactome" id="R-SCE-72695">
    <property type="pathway name" value="Formation of the ternary complex, and subsequently, the 43S complex"/>
</dbReference>
<dbReference type="Reactome" id="R-SCE-72702">
    <property type="pathway name" value="Ribosomal scanning and start codon recognition"/>
</dbReference>
<dbReference type="Reactome" id="R-SCE-72706">
    <property type="pathway name" value="GTP hydrolysis and joining of the 60S ribosomal subunit"/>
</dbReference>
<dbReference type="Reactome" id="R-SCE-975956">
    <property type="pathway name" value="Nonsense Mediated Decay (NMD) independent of the Exon Junction Complex (EJC)"/>
</dbReference>
<dbReference type="Reactome" id="R-SCE-975957">
    <property type="pathway name" value="Nonsense Mediated Decay (NMD) enhanced by the Exon Junction Complex (EJC)"/>
</dbReference>
<dbReference type="BioGRID-ORCS" id="852206">
    <property type="hits" value="3 hits in 10 CRISPR screens"/>
</dbReference>
<dbReference type="BioGRID-ORCS" id="856839">
    <property type="hits" value="2 hits in 10 CRISPR screens"/>
</dbReference>
<dbReference type="PRO" id="PR:P0CX40"/>
<dbReference type="Proteomes" id="UP000002311">
    <property type="component" value="Chromosome V"/>
</dbReference>
<dbReference type="RNAct" id="P0CX40">
    <property type="molecule type" value="protein"/>
</dbReference>
<dbReference type="ExpressionAtlas" id="P0CX40">
    <property type="expression patterns" value="baseline and differential"/>
</dbReference>
<dbReference type="GO" id="GO:0030686">
    <property type="term" value="C:90S preribosome"/>
    <property type="evidence" value="ECO:0007005"/>
    <property type="project" value="SGD"/>
</dbReference>
<dbReference type="GO" id="GO:0005829">
    <property type="term" value="C:cytosol"/>
    <property type="evidence" value="ECO:0000304"/>
    <property type="project" value="Reactome"/>
</dbReference>
<dbReference type="GO" id="GO:0022627">
    <property type="term" value="C:cytosolic small ribosomal subunit"/>
    <property type="evidence" value="ECO:0000314"/>
    <property type="project" value="SGD"/>
</dbReference>
<dbReference type="GO" id="GO:0003735">
    <property type="term" value="F:structural constituent of ribosome"/>
    <property type="evidence" value="ECO:0000314"/>
    <property type="project" value="SGD"/>
</dbReference>
<dbReference type="GO" id="GO:0000462">
    <property type="term" value="P:maturation of SSU-rRNA from tricistronic rRNA transcript (SSU-rRNA, 5.8S rRNA, LSU-rRNA)"/>
    <property type="evidence" value="ECO:0000316"/>
    <property type="project" value="SGD"/>
</dbReference>
<dbReference type="GO" id="GO:0006412">
    <property type="term" value="P:translation"/>
    <property type="evidence" value="ECO:0007669"/>
    <property type="project" value="InterPro"/>
</dbReference>
<dbReference type="CDD" id="cd11380">
    <property type="entry name" value="Ribosomal_S8e_like"/>
    <property type="match status" value="1"/>
</dbReference>
<dbReference type="FunFam" id="1.10.168.20:FF:000001">
    <property type="entry name" value="40S ribosomal protein S8"/>
    <property type="match status" value="1"/>
</dbReference>
<dbReference type="Gene3D" id="3.10.290.70">
    <property type="match status" value="1"/>
</dbReference>
<dbReference type="Gene3D" id="1.10.168.20">
    <property type="entry name" value="Ribosomal protein S8e, subdomain"/>
    <property type="match status" value="1"/>
</dbReference>
<dbReference type="InterPro" id="IPR001047">
    <property type="entry name" value="Ribosomal_eS8"/>
</dbReference>
<dbReference type="InterPro" id="IPR018283">
    <property type="entry name" value="Ribosomal_eS8_CS"/>
</dbReference>
<dbReference type="InterPro" id="IPR042563">
    <property type="entry name" value="Ribosomal_protein_eS8_euk"/>
</dbReference>
<dbReference type="InterPro" id="IPR022309">
    <property type="entry name" value="Ribosomal_Se8/biogenesis_NSA2"/>
</dbReference>
<dbReference type="NCBIfam" id="TIGR00307">
    <property type="entry name" value="eS8"/>
    <property type="match status" value="1"/>
</dbReference>
<dbReference type="PANTHER" id="PTHR10394">
    <property type="entry name" value="40S RIBOSOMAL PROTEIN S8"/>
    <property type="match status" value="1"/>
</dbReference>
<dbReference type="Pfam" id="PF01201">
    <property type="entry name" value="Ribosomal_S8e"/>
    <property type="match status" value="1"/>
</dbReference>
<dbReference type="PROSITE" id="PS01193">
    <property type="entry name" value="RIBOSOMAL_S8E"/>
    <property type="match status" value="1"/>
</dbReference>
<accession>P0CX40</accession>
<accession>A2TBM0</accession>
<accession>A2TBP0</accession>
<accession>D3DM09</accession>
<accession>P05754</accession>
<accession>P22801</accession>
<feature type="initiator methionine" description="Removed" evidence="4">
    <location>
        <position position="1"/>
    </location>
</feature>
<feature type="chain" id="PRO_0000409766" description="Small ribosomal subunit protein eS8B">
    <location>
        <begin position="2"/>
        <end position="200"/>
    </location>
</feature>
<feature type="region of interest" description="Disordered" evidence="1">
    <location>
        <begin position="1"/>
        <end position="31"/>
    </location>
</feature>
<feature type="modified residue" description="Phosphothreonine" evidence="13">
    <location>
        <position position="62"/>
    </location>
</feature>
<feature type="modified residue" description="Phosphoserine" evidence="11">
    <location>
        <position position="66"/>
    </location>
</feature>
<feature type="modified residue" description="Phosphoserine" evidence="11 13">
    <location>
        <position position="69"/>
    </location>
</feature>
<feature type="modified residue" description="Phosphoserine" evidence="11 13">
    <location>
        <position position="73"/>
    </location>
</feature>
<feature type="modified residue" description="Phosphoserine" evidence="13">
    <location>
        <position position="86"/>
    </location>
</feature>
<feature type="modified residue" description="Phosphothreonine" evidence="12">
    <location>
        <position position="107"/>
    </location>
</feature>
<feature type="modified residue" description="Phosphoserine" evidence="13">
    <location>
        <position position="154"/>
    </location>
</feature>
<feature type="modified residue" description="Phosphoserine" evidence="13">
    <location>
        <position position="155"/>
    </location>
</feature>
<feature type="modified residue" description="Phosphoserine" evidence="12">
    <location>
        <position position="158"/>
    </location>
</feature>
<feature type="modified residue" description="Phosphoserine" evidence="13">
    <location>
        <position position="161"/>
    </location>
</feature>
<feature type="sequence conflict" description="In Ref. 5; AA sequence." evidence="8" ref="5">
    <original>R</original>
    <variation>K</variation>
    <location>
        <position position="49"/>
    </location>
</feature>
<feature type="helix" evidence="14">
    <location>
        <begin position="7"/>
        <end position="9"/>
    </location>
</feature>
<feature type="helix" evidence="14">
    <location>
        <begin position="26"/>
        <end position="28"/>
    </location>
</feature>
<feature type="strand" evidence="14">
    <location>
        <begin position="38"/>
        <end position="40"/>
    </location>
</feature>
<feature type="strand" evidence="14">
    <location>
        <begin position="42"/>
        <end position="48"/>
    </location>
</feature>
<feature type="strand" evidence="14">
    <location>
        <begin position="51"/>
        <end position="60"/>
    </location>
</feature>
<feature type="strand" evidence="14">
    <location>
        <begin position="62"/>
        <end position="67"/>
    </location>
</feature>
<feature type="turn" evidence="14">
    <location>
        <begin position="68"/>
        <end position="71"/>
    </location>
</feature>
<feature type="strand" evidence="14">
    <location>
        <begin position="72"/>
        <end position="83"/>
    </location>
</feature>
<feature type="helix" evidence="14">
    <location>
        <begin position="89"/>
        <end position="92"/>
    </location>
</feature>
<feature type="strand" evidence="14">
    <location>
        <begin position="101"/>
        <end position="104"/>
    </location>
</feature>
<feature type="helix" evidence="14">
    <location>
        <begin position="107"/>
        <end position="116"/>
    </location>
</feature>
<feature type="helix" evidence="14">
    <location>
        <begin position="137"/>
        <end position="145"/>
    </location>
</feature>
<feature type="helix" evidence="14">
    <location>
        <begin position="154"/>
        <end position="162"/>
    </location>
</feature>
<feature type="strand" evidence="14">
    <location>
        <begin position="165"/>
        <end position="169"/>
    </location>
</feature>
<feature type="turn" evidence="14">
    <location>
        <begin position="173"/>
        <end position="176"/>
    </location>
</feature>
<feature type="strand" evidence="14">
    <location>
        <begin position="181"/>
        <end position="183"/>
    </location>
</feature>
<feature type="helix" evidence="14">
    <location>
        <begin position="187"/>
        <end position="196"/>
    </location>
</feature>
<name>RS8B_YEAST</name>
<gene>
    <name evidence="7" type="primary">RPS8B</name>
    <name type="synonym">RPS14B</name>
    <name type="ordered locus">YER102W</name>
</gene>